<organism>
    <name type="scientific">Bacillus subtilis (strain 168)</name>
    <dbReference type="NCBI Taxonomy" id="224308"/>
    <lineage>
        <taxon>Bacteria</taxon>
        <taxon>Bacillati</taxon>
        <taxon>Bacillota</taxon>
        <taxon>Bacilli</taxon>
        <taxon>Bacillales</taxon>
        <taxon>Bacillaceae</taxon>
        <taxon>Bacillus</taxon>
    </lineage>
</organism>
<feature type="chain" id="PRO_0000389008" description="SPbeta prophage-derived putative HNH homing endonuclease YosQ">
    <location>
        <begin position="1"/>
        <end position="173"/>
    </location>
</feature>
<proteinExistence type="predicted"/>
<comment type="function">
    <text>A possible homing endonuclease, it is entirely encoded within the YosP intron.</text>
</comment>
<protein>
    <recommendedName>
        <fullName>SPbeta prophage-derived putative HNH homing endonuclease YosQ</fullName>
        <ecNumber>3.1.-.-</ecNumber>
    </recommendedName>
</protein>
<keyword id="KW-0255">Endonuclease</keyword>
<keyword id="KW-0378">Hydrolase</keyword>
<keyword id="KW-0404">Intron homing</keyword>
<keyword id="KW-0540">Nuclease</keyword>
<keyword id="KW-1185">Reference proteome</keyword>
<name>YOSQ_BACSU</name>
<accession>O34479</accession>
<accession>Q7BVQ1</accession>
<reference key="1">
    <citation type="journal article" date="1998" name="DNA Res.">
        <title>An 8 kb nucleotide sequence at the 3' flanking region of the sspC gene (184 degrees) on the Bacillus subtilis 168 chromosome containing an intein and an intron.</title>
        <authorList>
            <person name="Ghim S.-Y."/>
            <person name="Choi S.-K."/>
            <person name="Shin B.-S."/>
            <person name="Park S.-H."/>
        </authorList>
    </citation>
    <scope>NUCLEOTIDE SEQUENCE [GENOMIC DNA]</scope>
    <scope>DISCUSSION OF SEQUENCE</scope>
    <source>
        <strain>168</strain>
    </source>
</reference>
<reference key="2">
    <citation type="journal article" date="1997" name="Nature">
        <title>The complete genome sequence of the Gram-positive bacterium Bacillus subtilis.</title>
        <authorList>
            <person name="Kunst F."/>
            <person name="Ogasawara N."/>
            <person name="Moszer I."/>
            <person name="Albertini A.M."/>
            <person name="Alloni G."/>
            <person name="Azevedo V."/>
            <person name="Bertero M.G."/>
            <person name="Bessieres P."/>
            <person name="Bolotin A."/>
            <person name="Borchert S."/>
            <person name="Borriss R."/>
            <person name="Boursier L."/>
            <person name="Brans A."/>
            <person name="Braun M."/>
            <person name="Brignell S.C."/>
            <person name="Bron S."/>
            <person name="Brouillet S."/>
            <person name="Bruschi C.V."/>
            <person name="Caldwell B."/>
            <person name="Capuano V."/>
            <person name="Carter N.M."/>
            <person name="Choi S.-K."/>
            <person name="Codani J.-J."/>
            <person name="Connerton I.F."/>
            <person name="Cummings N.J."/>
            <person name="Daniel R.A."/>
            <person name="Denizot F."/>
            <person name="Devine K.M."/>
            <person name="Duesterhoeft A."/>
            <person name="Ehrlich S.D."/>
            <person name="Emmerson P.T."/>
            <person name="Entian K.-D."/>
            <person name="Errington J."/>
            <person name="Fabret C."/>
            <person name="Ferrari E."/>
            <person name="Foulger D."/>
            <person name="Fritz C."/>
            <person name="Fujita M."/>
            <person name="Fujita Y."/>
            <person name="Fuma S."/>
            <person name="Galizzi A."/>
            <person name="Galleron N."/>
            <person name="Ghim S.-Y."/>
            <person name="Glaser P."/>
            <person name="Goffeau A."/>
            <person name="Golightly E.J."/>
            <person name="Grandi G."/>
            <person name="Guiseppi G."/>
            <person name="Guy B.J."/>
            <person name="Haga K."/>
            <person name="Haiech J."/>
            <person name="Harwood C.R."/>
            <person name="Henaut A."/>
            <person name="Hilbert H."/>
            <person name="Holsappel S."/>
            <person name="Hosono S."/>
            <person name="Hullo M.-F."/>
            <person name="Itaya M."/>
            <person name="Jones L.-M."/>
            <person name="Joris B."/>
            <person name="Karamata D."/>
            <person name="Kasahara Y."/>
            <person name="Klaerr-Blanchard M."/>
            <person name="Klein C."/>
            <person name="Kobayashi Y."/>
            <person name="Koetter P."/>
            <person name="Koningstein G."/>
            <person name="Krogh S."/>
            <person name="Kumano M."/>
            <person name="Kurita K."/>
            <person name="Lapidus A."/>
            <person name="Lardinois S."/>
            <person name="Lauber J."/>
            <person name="Lazarevic V."/>
            <person name="Lee S.-M."/>
            <person name="Levine A."/>
            <person name="Liu H."/>
            <person name="Masuda S."/>
            <person name="Mauel C."/>
            <person name="Medigue C."/>
            <person name="Medina N."/>
            <person name="Mellado R.P."/>
            <person name="Mizuno M."/>
            <person name="Moestl D."/>
            <person name="Nakai S."/>
            <person name="Noback M."/>
            <person name="Noone D."/>
            <person name="O'Reilly M."/>
            <person name="Ogawa K."/>
            <person name="Ogiwara A."/>
            <person name="Oudega B."/>
            <person name="Park S.-H."/>
            <person name="Parro V."/>
            <person name="Pohl T.M."/>
            <person name="Portetelle D."/>
            <person name="Porwollik S."/>
            <person name="Prescott A.M."/>
            <person name="Presecan E."/>
            <person name="Pujic P."/>
            <person name="Purnelle B."/>
            <person name="Rapoport G."/>
            <person name="Rey M."/>
            <person name="Reynolds S."/>
            <person name="Rieger M."/>
            <person name="Rivolta C."/>
            <person name="Rocha E."/>
            <person name="Roche B."/>
            <person name="Rose M."/>
            <person name="Sadaie Y."/>
            <person name="Sato T."/>
            <person name="Scanlan E."/>
            <person name="Schleich S."/>
            <person name="Schroeter R."/>
            <person name="Scoffone F."/>
            <person name="Sekiguchi J."/>
            <person name="Sekowska A."/>
            <person name="Seror S.J."/>
            <person name="Serror P."/>
            <person name="Shin B.-S."/>
            <person name="Soldo B."/>
            <person name="Sorokin A."/>
            <person name="Tacconi E."/>
            <person name="Takagi T."/>
            <person name="Takahashi H."/>
            <person name="Takemaru K."/>
            <person name="Takeuchi M."/>
            <person name="Tamakoshi A."/>
            <person name="Tanaka T."/>
            <person name="Terpstra P."/>
            <person name="Tognoni A."/>
            <person name="Tosato V."/>
            <person name="Uchiyama S."/>
            <person name="Vandenbol M."/>
            <person name="Vannier F."/>
            <person name="Vassarotti A."/>
            <person name="Viari A."/>
            <person name="Wambutt R."/>
            <person name="Wedler E."/>
            <person name="Wedler H."/>
            <person name="Weitzenegger T."/>
            <person name="Winters P."/>
            <person name="Wipat A."/>
            <person name="Yamamoto H."/>
            <person name="Yamane K."/>
            <person name="Yasumoto K."/>
            <person name="Yata K."/>
            <person name="Yoshida K."/>
            <person name="Yoshikawa H.-F."/>
            <person name="Zumstein E."/>
            <person name="Yoshikawa H."/>
            <person name="Danchin A."/>
        </authorList>
    </citation>
    <scope>NUCLEOTIDE SEQUENCE [LARGE SCALE GENOMIC DNA]</scope>
    <source>
        <strain>168</strain>
    </source>
</reference>
<sequence length="173" mass="20119">MIRKEVEEAPWWITETGVIISKKLKKPRKTFITPHGYEMIGYTHPKKGTQNYLVHRLVAKYFIYDIPKGMFVNHIDGNKLNNHVRNLEIVTPKENTLHAMKIGLMSGQPGESNSMSKLTNMEATNLIYDLIAGMNNVEAGEKYSLHPRYVSLIRHKRRWKTLWDRIERSTTIA</sequence>
<dbReference type="EC" id="3.1.-.-"/>
<dbReference type="EMBL" id="AF012906">
    <property type="protein sequence ID" value="AAB92485.1"/>
    <property type="molecule type" value="Genomic_DNA"/>
</dbReference>
<dbReference type="EMBL" id="AL009126">
    <property type="protein sequence ID" value="CAB13895.1"/>
    <property type="molecule type" value="Genomic_DNA"/>
</dbReference>
<dbReference type="RefSeq" id="NP_389885.1">
    <property type="nucleotide sequence ID" value="NC_000964.3"/>
</dbReference>
<dbReference type="RefSeq" id="WP_004399561.1">
    <property type="nucleotide sequence ID" value="NZ_OZ025638.1"/>
</dbReference>
<dbReference type="SMR" id="O34479"/>
<dbReference type="FunCoup" id="O34479">
    <property type="interactions" value="41"/>
</dbReference>
<dbReference type="STRING" id="224308.BSU20050"/>
<dbReference type="PaxDb" id="224308-BSU20050"/>
<dbReference type="EnsemblBacteria" id="CAB13895">
    <property type="protein sequence ID" value="CAB13895"/>
    <property type="gene ID" value="BSU_20050"/>
</dbReference>
<dbReference type="GeneID" id="939514"/>
<dbReference type="KEGG" id="bsu:BSU20050"/>
<dbReference type="PATRIC" id="fig|224308.179.peg.2193"/>
<dbReference type="eggNOG" id="ENOG5033AUY">
    <property type="taxonomic scope" value="Bacteria"/>
</dbReference>
<dbReference type="InParanoid" id="O34479"/>
<dbReference type="OrthoDB" id="6631788at2"/>
<dbReference type="BioCyc" id="BSUB:BSU20050-MONOMER"/>
<dbReference type="Proteomes" id="UP000001570">
    <property type="component" value="Chromosome"/>
</dbReference>
<dbReference type="GO" id="GO:0004519">
    <property type="term" value="F:endonuclease activity"/>
    <property type="evidence" value="ECO:0007669"/>
    <property type="project" value="UniProtKB-KW"/>
</dbReference>
<dbReference type="GO" id="GO:0006314">
    <property type="term" value="P:intron homing"/>
    <property type="evidence" value="ECO:0007669"/>
    <property type="project" value="UniProtKB-KW"/>
</dbReference>
<dbReference type="Gene3D" id="3.90.75.20">
    <property type="match status" value="1"/>
</dbReference>
<dbReference type="InterPro" id="IPR044925">
    <property type="entry name" value="His-Me_finger_sf"/>
</dbReference>
<dbReference type="InterPro" id="IPR003615">
    <property type="entry name" value="HNH_nuc"/>
</dbReference>
<dbReference type="Pfam" id="PF13392">
    <property type="entry name" value="HNH_3"/>
    <property type="match status" value="1"/>
</dbReference>
<dbReference type="SMART" id="SM00507">
    <property type="entry name" value="HNHc"/>
    <property type="match status" value="1"/>
</dbReference>
<dbReference type="SUPFAM" id="SSF54060">
    <property type="entry name" value="His-Me finger endonucleases"/>
    <property type="match status" value="1"/>
</dbReference>
<gene>
    <name type="primary">yosQ</name>
    <name type="synonym">yojR</name>
    <name type="ordered locus">BSU20050</name>
</gene>